<reference key="1">
    <citation type="journal article" date="2007" name="Genome Biol.">
        <title>Characterization and modeling of the Haemophilus influenzae core and supragenomes based on the complete genomic sequences of Rd and 12 clinical nontypeable strains.</title>
        <authorList>
            <person name="Hogg J.S."/>
            <person name="Hu F.Z."/>
            <person name="Janto B."/>
            <person name="Boissy R."/>
            <person name="Hayes J."/>
            <person name="Keefe R."/>
            <person name="Post J.C."/>
            <person name="Ehrlich G.D."/>
        </authorList>
    </citation>
    <scope>NUCLEOTIDE SEQUENCE [LARGE SCALE GENOMIC DNA]</scope>
    <source>
        <strain>PittEE</strain>
    </source>
</reference>
<keyword id="KW-0067">ATP-binding</keyword>
<keyword id="KW-0963">Cytoplasm</keyword>
<keyword id="KW-0418">Kinase</keyword>
<keyword id="KW-0460">Magnesium</keyword>
<keyword id="KW-0479">Metal-binding</keyword>
<keyword id="KW-0546">Nucleotide metabolism</keyword>
<keyword id="KW-0547">Nucleotide-binding</keyword>
<keyword id="KW-0597">Phosphoprotein</keyword>
<keyword id="KW-0808">Transferase</keyword>
<comment type="function">
    <text evidence="1">Major role in the synthesis of nucleoside triphosphates other than ATP. The ATP gamma phosphate is transferred to the NDP beta phosphate via a ping-pong mechanism, using a phosphorylated active-site intermediate.</text>
</comment>
<comment type="catalytic activity">
    <reaction evidence="1">
        <text>a 2'-deoxyribonucleoside 5'-diphosphate + ATP = a 2'-deoxyribonucleoside 5'-triphosphate + ADP</text>
        <dbReference type="Rhea" id="RHEA:44640"/>
        <dbReference type="ChEBI" id="CHEBI:30616"/>
        <dbReference type="ChEBI" id="CHEBI:61560"/>
        <dbReference type="ChEBI" id="CHEBI:73316"/>
        <dbReference type="ChEBI" id="CHEBI:456216"/>
        <dbReference type="EC" id="2.7.4.6"/>
    </reaction>
</comment>
<comment type="catalytic activity">
    <reaction evidence="1">
        <text>a ribonucleoside 5'-diphosphate + ATP = a ribonucleoside 5'-triphosphate + ADP</text>
        <dbReference type="Rhea" id="RHEA:18113"/>
        <dbReference type="ChEBI" id="CHEBI:30616"/>
        <dbReference type="ChEBI" id="CHEBI:57930"/>
        <dbReference type="ChEBI" id="CHEBI:61557"/>
        <dbReference type="ChEBI" id="CHEBI:456216"/>
        <dbReference type="EC" id="2.7.4.6"/>
    </reaction>
</comment>
<comment type="cofactor">
    <cofactor evidence="1">
        <name>Mg(2+)</name>
        <dbReference type="ChEBI" id="CHEBI:18420"/>
    </cofactor>
</comment>
<comment type="subunit">
    <text evidence="1">Homotetramer.</text>
</comment>
<comment type="subcellular location">
    <subcellularLocation>
        <location evidence="1">Cytoplasm</location>
    </subcellularLocation>
</comment>
<comment type="similarity">
    <text evidence="1">Belongs to the NDK family.</text>
</comment>
<proteinExistence type="inferred from homology"/>
<accession>A5UDJ8</accession>
<feature type="chain" id="PRO_1000192258" description="Nucleoside diphosphate kinase">
    <location>
        <begin position="1"/>
        <end position="140"/>
    </location>
</feature>
<feature type="active site" description="Pros-phosphohistidine intermediate" evidence="1">
    <location>
        <position position="116"/>
    </location>
</feature>
<feature type="binding site" evidence="1">
    <location>
        <position position="10"/>
    </location>
    <ligand>
        <name>ATP</name>
        <dbReference type="ChEBI" id="CHEBI:30616"/>
    </ligand>
</feature>
<feature type="binding site" evidence="1">
    <location>
        <position position="58"/>
    </location>
    <ligand>
        <name>ATP</name>
        <dbReference type="ChEBI" id="CHEBI:30616"/>
    </ligand>
</feature>
<feature type="binding site" evidence="1">
    <location>
        <position position="86"/>
    </location>
    <ligand>
        <name>ATP</name>
        <dbReference type="ChEBI" id="CHEBI:30616"/>
    </ligand>
</feature>
<feature type="binding site" evidence="1">
    <location>
        <position position="92"/>
    </location>
    <ligand>
        <name>ATP</name>
        <dbReference type="ChEBI" id="CHEBI:30616"/>
    </ligand>
</feature>
<feature type="binding site" evidence="1">
    <location>
        <position position="103"/>
    </location>
    <ligand>
        <name>ATP</name>
        <dbReference type="ChEBI" id="CHEBI:30616"/>
    </ligand>
</feature>
<feature type="binding site" evidence="1">
    <location>
        <position position="113"/>
    </location>
    <ligand>
        <name>ATP</name>
        <dbReference type="ChEBI" id="CHEBI:30616"/>
    </ligand>
</feature>
<name>NDK_HAEIE</name>
<protein>
    <recommendedName>
        <fullName evidence="1">Nucleoside diphosphate kinase</fullName>
        <shortName evidence="1">NDK</shortName>
        <shortName evidence="1">NDP kinase</shortName>
        <ecNumber evidence="1">2.7.4.6</ecNumber>
    </recommendedName>
    <alternativeName>
        <fullName evidence="1">Nucleoside-2-P kinase</fullName>
    </alternativeName>
</protein>
<dbReference type="EC" id="2.7.4.6" evidence="1"/>
<dbReference type="EMBL" id="CP000671">
    <property type="protein sequence ID" value="ABQ98849.1"/>
    <property type="molecule type" value="Genomic_DNA"/>
</dbReference>
<dbReference type="SMR" id="A5UDJ8"/>
<dbReference type="KEGG" id="hip:CGSHiEE_07650"/>
<dbReference type="HOGENOM" id="CLU_060216_8_1_6"/>
<dbReference type="GO" id="GO:0005737">
    <property type="term" value="C:cytoplasm"/>
    <property type="evidence" value="ECO:0007669"/>
    <property type="project" value="UniProtKB-SubCell"/>
</dbReference>
<dbReference type="GO" id="GO:0005524">
    <property type="term" value="F:ATP binding"/>
    <property type="evidence" value="ECO:0007669"/>
    <property type="project" value="UniProtKB-UniRule"/>
</dbReference>
<dbReference type="GO" id="GO:0046872">
    <property type="term" value="F:metal ion binding"/>
    <property type="evidence" value="ECO:0007669"/>
    <property type="project" value="UniProtKB-KW"/>
</dbReference>
<dbReference type="GO" id="GO:0004550">
    <property type="term" value="F:nucleoside diphosphate kinase activity"/>
    <property type="evidence" value="ECO:0007669"/>
    <property type="project" value="UniProtKB-UniRule"/>
</dbReference>
<dbReference type="GO" id="GO:0006241">
    <property type="term" value="P:CTP biosynthetic process"/>
    <property type="evidence" value="ECO:0007669"/>
    <property type="project" value="UniProtKB-UniRule"/>
</dbReference>
<dbReference type="GO" id="GO:0006183">
    <property type="term" value="P:GTP biosynthetic process"/>
    <property type="evidence" value="ECO:0007669"/>
    <property type="project" value="UniProtKB-UniRule"/>
</dbReference>
<dbReference type="GO" id="GO:0006228">
    <property type="term" value="P:UTP biosynthetic process"/>
    <property type="evidence" value="ECO:0007669"/>
    <property type="project" value="UniProtKB-UniRule"/>
</dbReference>
<dbReference type="CDD" id="cd04413">
    <property type="entry name" value="NDPk_I"/>
    <property type="match status" value="1"/>
</dbReference>
<dbReference type="FunFam" id="3.30.70.141:FF:000001">
    <property type="entry name" value="Nucleoside diphosphate kinase"/>
    <property type="match status" value="1"/>
</dbReference>
<dbReference type="Gene3D" id="3.30.70.141">
    <property type="entry name" value="Nucleoside diphosphate kinase-like domain"/>
    <property type="match status" value="1"/>
</dbReference>
<dbReference type="HAMAP" id="MF_00451">
    <property type="entry name" value="NDP_kinase"/>
    <property type="match status" value="1"/>
</dbReference>
<dbReference type="InterPro" id="IPR034907">
    <property type="entry name" value="NDK-like_dom"/>
</dbReference>
<dbReference type="InterPro" id="IPR036850">
    <property type="entry name" value="NDK-like_dom_sf"/>
</dbReference>
<dbReference type="InterPro" id="IPR001564">
    <property type="entry name" value="Nucleoside_diP_kinase"/>
</dbReference>
<dbReference type="InterPro" id="IPR023005">
    <property type="entry name" value="Nucleoside_diP_kinase_AS"/>
</dbReference>
<dbReference type="NCBIfam" id="NF001908">
    <property type="entry name" value="PRK00668.1"/>
    <property type="match status" value="1"/>
</dbReference>
<dbReference type="PANTHER" id="PTHR46161">
    <property type="entry name" value="NUCLEOSIDE DIPHOSPHATE KINASE"/>
    <property type="match status" value="1"/>
</dbReference>
<dbReference type="PANTHER" id="PTHR46161:SF3">
    <property type="entry name" value="NUCLEOSIDE DIPHOSPHATE KINASE DDB_G0292928-RELATED"/>
    <property type="match status" value="1"/>
</dbReference>
<dbReference type="Pfam" id="PF00334">
    <property type="entry name" value="NDK"/>
    <property type="match status" value="1"/>
</dbReference>
<dbReference type="PRINTS" id="PR01243">
    <property type="entry name" value="NUCDPKINASE"/>
</dbReference>
<dbReference type="SMART" id="SM00562">
    <property type="entry name" value="NDK"/>
    <property type="match status" value="1"/>
</dbReference>
<dbReference type="SUPFAM" id="SSF54919">
    <property type="entry name" value="Nucleoside diphosphate kinase, NDK"/>
    <property type="match status" value="1"/>
</dbReference>
<dbReference type="PROSITE" id="PS00469">
    <property type="entry name" value="NDPK"/>
    <property type="match status" value="1"/>
</dbReference>
<dbReference type="PROSITE" id="PS51374">
    <property type="entry name" value="NDPK_LIKE"/>
    <property type="match status" value="1"/>
</dbReference>
<sequence>MTERTFSIIKPDAVKRNLIGAILTRFEQNGFKIIASKMVRLTREQAEGFYAEHQGKEFFAPLVEYMMSSPIVVSVLEKENAVKDYRTLIGTTNPETAEEGTIRKDFALSQRENSVHGSDSIENANREIAYFFTDCEIFER</sequence>
<organism>
    <name type="scientific">Haemophilus influenzae (strain PittEE)</name>
    <dbReference type="NCBI Taxonomy" id="374930"/>
    <lineage>
        <taxon>Bacteria</taxon>
        <taxon>Pseudomonadati</taxon>
        <taxon>Pseudomonadota</taxon>
        <taxon>Gammaproteobacteria</taxon>
        <taxon>Pasteurellales</taxon>
        <taxon>Pasteurellaceae</taxon>
        <taxon>Haemophilus</taxon>
    </lineage>
</organism>
<evidence type="ECO:0000255" key="1">
    <source>
        <dbReference type="HAMAP-Rule" id="MF_00451"/>
    </source>
</evidence>
<gene>
    <name evidence="1" type="primary">ndk</name>
    <name type="ordered locus">CGSHiEE_07650</name>
</gene>